<organism>
    <name type="scientific">Bos taurus</name>
    <name type="common">Bovine</name>
    <dbReference type="NCBI Taxonomy" id="9913"/>
    <lineage>
        <taxon>Eukaryota</taxon>
        <taxon>Metazoa</taxon>
        <taxon>Chordata</taxon>
        <taxon>Craniata</taxon>
        <taxon>Vertebrata</taxon>
        <taxon>Euteleostomi</taxon>
        <taxon>Mammalia</taxon>
        <taxon>Eutheria</taxon>
        <taxon>Laurasiatheria</taxon>
        <taxon>Artiodactyla</taxon>
        <taxon>Ruminantia</taxon>
        <taxon>Pecora</taxon>
        <taxon>Bovidae</taxon>
        <taxon>Bovinae</taxon>
        <taxon>Bos</taxon>
    </lineage>
</organism>
<gene>
    <name type="primary">HSPB9</name>
</gene>
<keyword id="KW-0963">Cytoplasm</keyword>
<keyword id="KW-0539">Nucleus</keyword>
<keyword id="KW-1185">Reference proteome</keyword>
<keyword id="KW-0346">Stress response</keyword>
<sequence>MQRVGSSLPSGSQSASQCPSVAFTERNQVATLPVQRLTEDAAAVRDNVHTEDGFQMKLYAHGFTPEELLVQVNSGCLVVTGQRQLEGCNPDGTGFRVAQKVHQQMSLPPDLDPAAMTCCLTPSGQLCVRGQCRALPPSEAQTGPASRFRSRGSKKLA</sequence>
<evidence type="ECO:0000250" key="1"/>
<evidence type="ECO:0000255" key="2">
    <source>
        <dbReference type="PROSITE-ProRule" id="PRU00285"/>
    </source>
</evidence>
<evidence type="ECO:0000256" key="3">
    <source>
        <dbReference type="SAM" id="MobiDB-lite"/>
    </source>
</evidence>
<proteinExistence type="evidence at transcript level"/>
<accession>Q2TBQ6</accession>
<feature type="chain" id="PRO_0000282853" description="Heat shock protein beta-9">
    <location>
        <begin position="1"/>
        <end position="157"/>
    </location>
</feature>
<feature type="domain" description="sHSP" evidence="2">
    <location>
        <begin position="35"/>
        <end position="148"/>
    </location>
</feature>
<feature type="region of interest" description="Disordered" evidence="3">
    <location>
        <begin position="1"/>
        <end position="20"/>
    </location>
</feature>
<feature type="region of interest" description="Disordered" evidence="3">
    <location>
        <begin position="136"/>
        <end position="157"/>
    </location>
</feature>
<feature type="compositionally biased region" description="Low complexity" evidence="3">
    <location>
        <begin position="1"/>
        <end position="17"/>
    </location>
</feature>
<feature type="compositionally biased region" description="Basic residues" evidence="3">
    <location>
        <begin position="148"/>
        <end position="157"/>
    </location>
</feature>
<comment type="subcellular location">
    <subcellularLocation>
        <location evidence="1">Cytoplasm</location>
    </subcellularLocation>
    <subcellularLocation>
        <location evidence="1">Nucleus</location>
    </subcellularLocation>
    <text evidence="1">Translocates to nuclear foci during heat shock.</text>
</comment>
<comment type="similarity">
    <text evidence="2">Belongs to the small heat shock protein (HSP20) family.</text>
</comment>
<protein>
    <recommendedName>
        <fullName>Heat shock protein beta-9</fullName>
        <shortName>HspB9</shortName>
    </recommendedName>
</protein>
<name>HSPB9_BOVIN</name>
<reference key="1">
    <citation type="submission" date="2005-11" db="EMBL/GenBank/DDBJ databases">
        <authorList>
            <consortium name="NIH - Mammalian Gene Collection (MGC) project"/>
        </authorList>
    </citation>
    <scope>NUCLEOTIDE SEQUENCE [LARGE SCALE MRNA]</scope>
    <source>
        <strain>Crossbred X Angus</strain>
        <tissue>Liver</tissue>
    </source>
</reference>
<dbReference type="EMBL" id="BC109809">
    <property type="protein sequence ID" value="AAI09810.1"/>
    <property type="molecule type" value="mRNA"/>
</dbReference>
<dbReference type="RefSeq" id="NP_001035667.1">
    <property type="nucleotide sequence ID" value="NM_001040577.2"/>
</dbReference>
<dbReference type="SMR" id="Q2TBQ6"/>
<dbReference type="FunCoup" id="Q2TBQ6">
    <property type="interactions" value="31"/>
</dbReference>
<dbReference type="STRING" id="9913.ENSBTAP00000034717"/>
<dbReference type="PaxDb" id="9913-ENSBTAP00000034717"/>
<dbReference type="Ensembl" id="ENSBTAT00000034833.4">
    <property type="protein sequence ID" value="ENSBTAP00000034717.2"/>
    <property type="gene ID" value="ENSBTAG00000024979.4"/>
</dbReference>
<dbReference type="GeneID" id="614199"/>
<dbReference type="KEGG" id="bta:614199"/>
<dbReference type="CTD" id="94086"/>
<dbReference type="VEuPathDB" id="HostDB:ENSBTAG00000024979"/>
<dbReference type="VGNC" id="VGNC:55839">
    <property type="gene designation" value="HSPB9"/>
</dbReference>
<dbReference type="eggNOG" id="KOG3591">
    <property type="taxonomic scope" value="Eukaryota"/>
</dbReference>
<dbReference type="GeneTree" id="ENSGT00510000049735"/>
<dbReference type="HOGENOM" id="CLU_1585932_0_0_1"/>
<dbReference type="InParanoid" id="Q2TBQ6"/>
<dbReference type="OMA" id="TAMTCCL"/>
<dbReference type="OrthoDB" id="8946669at2759"/>
<dbReference type="TreeFam" id="TF338684"/>
<dbReference type="Proteomes" id="UP000009136">
    <property type="component" value="Chromosome 19"/>
</dbReference>
<dbReference type="Bgee" id="ENSBTAG00000024979">
    <property type="expression patterns" value="Expressed in semen and 5 other cell types or tissues"/>
</dbReference>
<dbReference type="GO" id="GO:0005737">
    <property type="term" value="C:cytoplasm"/>
    <property type="evidence" value="ECO:0000250"/>
    <property type="project" value="UniProtKB"/>
</dbReference>
<dbReference type="GO" id="GO:0005829">
    <property type="term" value="C:cytosol"/>
    <property type="evidence" value="ECO:0007669"/>
    <property type="project" value="Ensembl"/>
</dbReference>
<dbReference type="GO" id="GO:0005654">
    <property type="term" value="C:nucleoplasm"/>
    <property type="evidence" value="ECO:0007669"/>
    <property type="project" value="Ensembl"/>
</dbReference>
<dbReference type="GO" id="GO:0005634">
    <property type="term" value="C:nucleus"/>
    <property type="evidence" value="ECO:0000250"/>
    <property type="project" value="UniProtKB"/>
</dbReference>
<dbReference type="FunFam" id="2.60.40.790:FF:000063">
    <property type="entry name" value="Heat shock protein beta-9"/>
    <property type="match status" value="1"/>
</dbReference>
<dbReference type="Gene3D" id="2.60.40.790">
    <property type="match status" value="1"/>
</dbReference>
<dbReference type="InterPro" id="IPR002068">
    <property type="entry name" value="A-crystallin/Hsp20_dom"/>
</dbReference>
<dbReference type="InterPro" id="IPR008978">
    <property type="entry name" value="HSP20-like_chaperone"/>
</dbReference>
<dbReference type="InterPro" id="IPR042940">
    <property type="entry name" value="HSPB9"/>
</dbReference>
<dbReference type="PANTHER" id="PTHR47896">
    <property type="entry name" value="HEAT SHOCK PROTEIN BETA-9"/>
    <property type="match status" value="1"/>
</dbReference>
<dbReference type="PANTHER" id="PTHR47896:SF1">
    <property type="entry name" value="HEAT SHOCK PROTEIN BETA-9"/>
    <property type="match status" value="1"/>
</dbReference>
<dbReference type="Pfam" id="PF00011">
    <property type="entry name" value="HSP20"/>
    <property type="match status" value="1"/>
</dbReference>
<dbReference type="SUPFAM" id="SSF49764">
    <property type="entry name" value="HSP20-like chaperones"/>
    <property type="match status" value="1"/>
</dbReference>
<dbReference type="PROSITE" id="PS01031">
    <property type="entry name" value="SHSP"/>
    <property type="match status" value="1"/>
</dbReference>